<protein>
    <recommendedName>
        <fullName evidence="1">5-methyltetrahydropteroyltriglutamate--homocysteine methyltransferase</fullName>
        <ecNumber evidence="1">2.1.1.14</ecNumber>
    </recommendedName>
    <alternativeName>
        <fullName evidence="1">Cobalamin-independent methionine synthase</fullName>
    </alternativeName>
    <alternativeName>
        <fullName evidence="1">Methionine synthase, vitamin-B12 independent isozyme</fullName>
    </alternativeName>
</protein>
<reference key="1">
    <citation type="journal article" date="2003" name="Nat. Genet.">
        <title>Comparative analysis of the genome sequences of Bordetella pertussis, Bordetella parapertussis and Bordetella bronchiseptica.</title>
        <authorList>
            <person name="Parkhill J."/>
            <person name="Sebaihia M."/>
            <person name="Preston A."/>
            <person name="Murphy L.D."/>
            <person name="Thomson N.R."/>
            <person name="Harris D.E."/>
            <person name="Holden M.T.G."/>
            <person name="Churcher C.M."/>
            <person name="Bentley S.D."/>
            <person name="Mungall K.L."/>
            <person name="Cerdeno-Tarraga A.-M."/>
            <person name="Temple L."/>
            <person name="James K.D."/>
            <person name="Harris B."/>
            <person name="Quail M.A."/>
            <person name="Achtman M."/>
            <person name="Atkin R."/>
            <person name="Baker S."/>
            <person name="Basham D."/>
            <person name="Bason N."/>
            <person name="Cherevach I."/>
            <person name="Chillingworth T."/>
            <person name="Collins M."/>
            <person name="Cronin A."/>
            <person name="Davis P."/>
            <person name="Doggett J."/>
            <person name="Feltwell T."/>
            <person name="Goble A."/>
            <person name="Hamlin N."/>
            <person name="Hauser H."/>
            <person name="Holroyd S."/>
            <person name="Jagels K."/>
            <person name="Leather S."/>
            <person name="Moule S."/>
            <person name="Norberczak H."/>
            <person name="O'Neil S."/>
            <person name="Ormond D."/>
            <person name="Price C."/>
            <person name="Rabbinowitsch E."/>
            <person name="Rutter S."/>
            <person name="Sanders M."/>
            <person name="Saunders D."/>
            <person name="Seeger K."/>
            <person name="Sharp S."/>
            <person name="Simmonds M."/>
            <person name="Skelton J."/>
            <person name="Squares R."/>
            <person name="Squares S."/>
            <person name="Stevens K."/>
            <person name="Unwin L."/>
            <person name="Whitehead S."/>
            <person name="Barrell B.G."/>
            <person name="Maskell D.J."/>
        </authorList>
    </citation>
    <scope>NUCLEOTIDE SEQUENCE [LARGE SCALE GENOMIC DNA]</scope>
    <source>
        <strain>12822 / ATCC BAA-587 / NCTC 13253</strain>
    </source>
</reference>
<sequence length="764" mass="84332">MTIIHNLGFPRIGAQRELKRAVEAYWAGRQTAEALHETGRALRAAHWQRQADAGVAFVPVGDFAWYDHILEWTTLLGAVPARFGHPEGKPVDLDTLFRMGRGRAPSGKPAAACEMTKWFDTNYHYIVPELTPGQTFRVAREDLFEQVKEAQALGHRVKPVIPGPLTWLWLGKGDAFAQGAGDIGKLQLLDALLPVYGEVLERLAGLGVEWVQIDEPALVLDLPQAWRDAYQAVYAKLAASPVKLLLATYFDGLKDNLATALALPVAGLHVDLVRAPDQLSDVASGLRPGQVLSAGVINGRNIWRTDLDAALAMLAPVREQLQERLWLAPSCSLLHVPVDLAGETELDAELLGWLSFAVQKLDELCLLGKALGGDADPAVQQGLAAQRAALQARRQSPRIHNPAVAQRMAGQAGVSRERAPFGQRIARQQSELRLPAFPTTTIGSFPQTAEIRALRRDWKSGALTDSAYENAIRKEIEEVIRFQEKVGLDVLVHGEPERNDMVEYFGELLAGFAFTKNGWVQSYGSRCVKPPIIFGDVARPAPMTVGWSAYAQSLTDKPVKGMLTGPVTILQWSFVRDDQPREATCRQLALALRDEVVDLEAAGIRVIQIDEPAIREGLPLRRADWRAYLDWAVDCFRLSTAGVGEATQIHTHMCYSEFNDIIESIAAMDADVITIETSRSNMELLKAFEDFHYPNDIGPGVYDIHSPNVPEVDWMVELMRKAAARLPKERLWVNPDCGLKTRAWPETEAALIGMVQAARTLRAA</sequence>
<dbReference type="EC" id="2.1.1.14" evidence="1"/>
<dbReference type="EMBL" id="BX640431">
    <property type="protein sequence ID" value="CAE37928.1"/>
    <property type="status" value="ALT_INIT"/>
    <property type="molecule type" value="Genomic_DNA"/>
</dbReference>
<dbReference type="RefSeq" id="WP_010926372.1">
    <property type="nucleotide sequence ID" value="NC_002928.3"/>
</dbReference>
<dbReference type="SMR" id="Q7W791"/>
<dbReference type="GeneID" id="93204421"/>
<dbReference type="KEGG" id="bpa:BPP2636"/>
<dbReference type="HOGENOM" id="CLU_013175_0_0_4"/>
<dbReference type="UniPathway" id="UPA00051">
    <property type="reaction ID" value="UER00082"/>
</dbReference>
<dbReference type="Proteomes" id="UP000001421">
    <property type="component" value="Chromosome"/>
</dbReference>
<dbReference type="GO" id="GO:0003871">
    <property type="term" value="F:5-methyltetrahydropteroyltriglutamate-homocysteine S-methyltransferase activity"/>
    <property type="evidence" value="ECO:0007669"/>
    <property type="project" value="UniProtKB-UniRule"/>
</dbReference>
<dbReference type="GO" id="GO:0008270">
    <property type="term" value="F:zinc ion binding"/>
    <property type="evidence" value="ECO:0007669"/>
    <property type="project" value="InterPro"/>
</dbReference>
<dbReference type="GO" id="GO:0009086">
    <property type="term" value="P:methionine biosynthetic process"/>
    <property type="evidence" value="ECO:0007669"/>
    <property type="project" value="UniProtKB-UniRule"/>
</dbReference>
<dbReference type="GO" id="GO:0032259">
    <property type="term" value="P:methylation"/>
    <property type="evidence" value="ECO:0007669"/>
    <property type="project" value="UniProtKB-KW"/>
</dbReference>
<dbReference type="CDD" id="cd03311">
    <property type="entry name" value="CIMS_C_terminal_like"/>
    <property type="match status" value="1"/>
</dbReference>
<dbReference type="CDD" id="cd03312">
    <property type="entry name" value="CIMS_N_terminal_like"/>
    <property type="match status" value="1"/>
</dbReference>
<dbReference type="FunFam" id="3.20.20.210:FF:000002">
    <property type="entry name" value="5-methyltetrahydropteroyltriglutamate--homocysteine methyltransferase"/>
    <property type="match status" value="1"/>
</dbReference>
<dbReference type="FunFam" id="3.20.20.210:FF:000003">
    <property type="entry name" value="5-methyltetrahydropteroyltriglutamate--homocysteine methyltransferase"/>
    <property type="match status" value="1"/>
</dbReference>
<dbReference type="Gene3D" id="3.20.20.210">
    <property type="match status" value="2"/>
</dbReference>
<dbReference type="HAMAP" id="MF_00172">
    <property type="entry name" value="Meth_synth"/>
    <property type="match status" value="1"/>
</dbReference>
<dbReference type="InterPro" id="IPR013215">
    <property type="entry name" value="Cbl-indep_Met_Synth_N"/>
</dbReference>
<dbReference type="InterPro" id="IPR006276">
    <property type="entry name" value="Cobalamin-indep_Met_synthase"/>
</dbReference>
<dbReference type="InterPro" id="IPR002629">
    <property type="entry name" value="Met_Synth_C/arc"/>
</dbReference>
<dbReference type="InterPro" id="IPR038071">
    <property type="entry name" value="UROD/MetE-like_sf"/>
</dbReference>
<dbReference type="NCBIfam" id="TIGR01371">
    <property type="entry name" value="met_syn_B12ind"/>
    <property type="match status" value="1"/>
</dbReference>
<dbReference type="NCBIfam" id="NF003556">
    <property type="entry name" value="PRK05222.1"/>
    <property type="match status" value="1"/>
</dbReference>
<dbReference type="PANTHER" id="PTHR30519">
    <property type="entry name" value="5-METHYLTETRAHYDROPTEROYLTRIGLUTAMATE--HOMOCYSTEINE METHYLTRANSFERASE"/>
    <property type="match status" value="1"/>
</dbReference>
<dbReference type="Pfam" id="PF08267">
    <property type="entry name" value="Meth_synt_1"/>
    <property type="match status" value="1"/>
</dbReference>
<dbReference type="Pfam" id="PF01717">
    <property type="entry name" value="Meth_synt_2"/>
    <property type="match status" value="1"/>
</dbReference>
<dbReference type="PIRSF" id="PIRSF000382">
    <property type="entry name" value="MeTrfase_B12_ind"/>
    <property type="match status" value="1"/>
</dbReference>
<dbReference type="SUPFAM" id="SSF51726">
    <property type="entry name" value="UROD/MetE-like"/>
    <property type="match status" value="2"/>
</dbReference>
<feature type="chain" id="PRO_0000098616" description="5-methyltetrahydropteroyltriglutamate--homocysteine methyltransferase">
    <location>
        <begin position="1"/>
        <end position="764"/>
    </location>
</feature>
<feature type="active site" description="Proton donor" evidence="1">
    <location>
        <position position="705"/>
    </location>
</feature>
<feature type="binding site" evidence="1">
    <location>
        <begin position="16"/>
        <end position="19"/>
    </location>
    <ligand>
        <name>5-methyltetrahydropteroyltri-L-glutamate</name>
        <dbReference type="ChEBI" id="CHEBI:58207"/>
    </ligand>
</feature>
<feature type="binding site" evidence="1">
    <location>
        <position position="117"/>
    </location>
    <ligand>
        <name>5-methyltetrahydropteroyltri-L-glutamate</name>
        <dbReference type="ChEBI" id="CHEBI:58207"/>
    </ligand>
</feature>
<feature type="binding site" evidence="1">
    <location>
        <begin position="442"/>
        <end position="444"/>
    </location>
    <ligand>
        <name>L-homocysteine</name>
        <dbReference type="ChEBI" id="CHEBI:58199"/>
    </ligand>
</feature>
<feature type="binding site" evidence="1">
    <location>
        <begin position="442"/>
        <end position="444"/>
    </location>
    <ligand>
        <name>L-methionine</name>
        <dbReference type="ChEBI" id="CHEBI:57844"/>
    </ligand>
</feature>
<feature type="binding site" evidence="1">
    <location>
        <position position="495"/>
    </location>
    <ligand>
        <name>L-homocysteine</name>
        <dbReference type="ChEBI" id="CHEBI:58199"/>
    </ligand>
</feature>
<feature type="binding site" evidence="1">
    <location>
        <position position="495"/>
    </location>
    <ligand>
        <name>L-methionine</name>
        <dbReference type="ChEBI" id="CHEBI:57844"/>
    </ligand>
</feature>
<feature type="binding site" evidence="1">
    <location>
        <begin position="526"/>
        <end position="527"/>
    </location>
    <ligand>
        <name>5-methyltetrahydropteroyltri-L-glutamate</name>
        <dbReference type="ChEBI" id="CHEBI:58207"/>
    </ligand>
</feature>
<feature type="binding site" evidence="1">
    <location>
        <position position="572"/>
    </location>
    <ligand>
        <name>5-methyltetrahydropteroyltri-L-glutamate</name>
        <dbReference type="ChEBI" id="CHEBI:58207"/>
    </ligand>
</feature>
<feature type="binding site" evidence="1">
    <location>
        <position position="610"/>
    </location>
    <ligand>
        <name>L-homocysteine</name>
        <dbReference type="ChEBI" id="CHEBI:58199"/>
    </ligand>
</feature>
<feature type="binding site" evidence="1">
    <location>
        <position position="610"/>
    </location>
    <ligand>
        <name>L-methionine</name>
        <dbReference type="ChEBI" id="CHEBI:57844"/>
    </ligand>
</feature>
<feature type="binding site" evidence="1">
    <location>
        <position position="616"/>
    </location>
    <ligand>
        <name>5-methyltetrahydropteroyltri-L-glutamate</name>
        <dbReference type="ChEBI" id="CHEBI:58207"/>
    </ligand>
</feature>
<feature type="binding site" evidence="1">
    <location>
        <position position="652"/>
    </location>
    <ligand>
        <name>Zn(2+)</name>
        <dbReference type="ChEBI" id="CHEBI:29105"/>
        <note>catalytic</note>
    </ligand>
</feature>
<feature type="binding site" evidence="1">
    <location>
        <position position="654"/>
    </location>
    <ligand>
        <name>Zn(2+)</name>
        <dbReference type="ChEBI" id="CHEBI:29105"/>
        <note>catalytic</note>
    </ligand>
</feature>
<feature type="binding site" evidence="1">
    <location>
        <position position="676"/>
    </location>
    <ligand>
        <name>Zn(2+)</name>
        <dbReference type="ChEBI" id="CHEBI:29105"/>
        <note>catalytic</note>
    </ligand>
</feature>
<feature type="binding site" evidence="1">
    <location>
        <position position="737"/>
    </location>
    <ligand>
        <name>Zn(2+)</name>
        <dbReference type="ChEBI" id="CHEBI:29105"/>
        <note>catalytic</note>
    </ligand>
</feature>
<organism>
    <name type="scientific">Bordetella parapertussis (strain 12822 / ATCC BAA-587 / NCTC 13253)</name>
    <dbReference type="NCBI Taxonomy" id="257311"/>
    <lineage>
        <taxon>Bacteria</taxon>
        <taxon>Pseudomonadati</taxon>
        <taxon>Pseudomonadota</taxon>
        <taxon>Betaproteobacteria</taxon>
        <taxon>Burkholderiales</taxon>
        <taxon>Alcaligenaceae</taxon>
        <taxon>Bordetella</taxon>
    </lineage>
</organism>
<comment type="function">
    <text evidence="1">Catalyzes the transfer of a methyl group from 5-methyltetrahydrofolate to homocysteine resulting in methionine formation.</text>
</comment>
<comment type="catalytic activity">
    <reaction evidence="1">
        <text>5-methyltetrahydropteroyltri-L-glutamate + L-homocysteine = tetrahydropteroyltri-L-glutamate + L-methionine</text>
        <dbReference type="Rhea" id="RHEA:21196"/>
        <dbReference type="ChEBI" id="CHEBI:57844"/>
        <dbReference type="ChEBI" id="CHEBI:58140"/>
        <dbReference type="ChEBI" id="CHEBI:58199"/>
        <dbReference type="ChEBI" id="CHEBI:58207"/>
        <dbReference type="EC" id="2.1.1.14"/>
    </reaction>
</comment>
<comment type="cofactor">
    <cofactor evidence="1">
        <name>Zn(2+)</name>
        <dbReference type="ChEBI" id="CHEBI:29105"/>
    </cofactor>
    <text evidence="1">Binds 1 zinc ion per subunit.</text>
</comment>
<comment type="pathway">
    <text evidence="1">Amino-acid biosynthesis; L-methionine biosynthesis via de novo pathway; L-methionine from L-homocysteine (MetE route): step 1/1.</text>
</comment>
<comment type="similarity">
    <text evidence="1">Belongs to the vitamin-B12 independent methionine synthase family.</text>
</comment>
<comment type="sequence caution" evidence="2">
    <conflict type="erroneous initiation">
        <sequence resource="EMBL-CDS" id="CAE37928"/>
    </conflict>
</comment>
<keyword id="KW-0028">Amino-acid biosynthesis</keyword>
<keyword id="KW-0479">Metal-binding</keyword>
<keyword id="KW-0486">Methionine biosynthesis</keyword>
<keyword id="KW-0489">Methyltransferase</keyword>
<keyword id="KW-0677">Repeat</keyword>
<keyword id="KW-0808">Transferase</keyword>
<keyword id="KW-0862">Zinc</keyword>
<name>METE_BORPA</name>
<gene>
    <name evidence="1" type="primary">metE</name>
    <name type="ordered locus">BPP2636</name>
</gene>
<accession>Q7W791</accession>
<evidence type="ECO:0000255" key="1">
    <source>
        <dbReference type="HAMAP-Rule" id="MF_00172"/>
    </source>
</evidence>
<evidence type="ECO:0000305" key="2"/>
<proteinExistence type="inferred from homology"/>